<name>H8M01_CYRHA</name>
<keyword id="KW-1015">Disulfide bond</keyword>
<keyword id="KW-0872">Ion channel impairing toxin</keyword>
<keyword id="KW-0960">Knottin</keyword>
<keyword id="KW-0964">Secreted</keyword>
<keyword id="KW-0732">Signal</keyword>
<keyword id="KW-0800">Toxin</keyword>
<organism>
    <name type="scientific">Cyriopagopus hainanus</name>
    <name type="common">Chinese bird spider</name>
    <name type="synonym">Haplopelma hainanum</name>
    <dbReference type="NCBI Taxonomy" id="209901"/>
    <lineage>
        <taxon>Eukaryota</taxon>
        <taxon>Metazoa</taxon>
        <taxon>Ecdysozoa</taxon>
        <taxon>Arthropoda</taxon>
        <taxon>Chelicerata</taxon>
        <taxon>Arachnida</taxon>
        <taxon>Araneae</taxon>
        <taxon>Mygalomorphae</taxon>
        <taxon>Theraphosidae</taxon>
        <taxon>Haplopelma</taxon>
    </lineage>
</organism>
<feature type="signal peptide" evidence="3">
    <location>
        <begin position="1"/>
        <end position="24"/>
    </location>
</feature>
<feature type="propeptide" id="PRO_0000400639" evidence="1">
    <location>
        <begin position="25"/>
        <end position="52"/>
    </location>
</feature>
<feature type="peptide" id="PRO_0000400640" description="U3-theraphotoxin-Hhn1e">
    <location>
        <begin position="53"/>
        <end position="87"/>
    </location>
</feature>
<feature type="disulfide bond" evidence="2">
    <location>
        <begin position="54"/>
        <end position="67"/>
    </location>
</feature>
<feature type="disulfide bond" evidence="2">
    <location>
        <begin position="61"/>
        <end position="72"/>
    </location>
</feature>
<feature type="disulfide bond" evidence="2">
    <location>
        <begin position="66"/>
        <end position="79"/>
    </location>
</feature>
<comment type="function">
    <text evidence="1">Ion channel inhibitor.</text>
</comment>
<comment type="subcellular location">
    <subcellularLocation>
        <location evidence="1">Secreted</location>
    </subcellularLocation>
</comment>
<comment type="tissue specificity">
    <text>Expressed by the venom gland.</text>
</comment>
<comment type="domain">
    <text evidence="1">The presence of a 'disulfide through disulfide knot' structurally defines this protein as a knottin.</text>
</comment>
<comment type="similarity">
    <text evidence="4">Belongs to the neurotoxin 10 (Hwtx-1) family. 51 (Hntx-8) subfamily. Hntx-8 sub-subfamily.</text>
</comment>
<dbReference type="EMBL" id="GU293109">
    <property type="protein sequence ID" value="ADB56925.1"/>
    <property type="molecule type" value="Genomic_DNA"/>
</dbReference>
<dbReference type="ArachnoServer" id="AS002070">
    <property type="toxin name" value="U3-theraphotoxin-Hhn1e"/>
</dbReference>
<dbReference type="GO" id="GO:0005576">
    <property type="term" value="C:extracellular region"/>
    <property type="evidence" value="ECO:0007669"/>
    <property type="project" value="UniProtKB-SubCell"/>
</dbReference>
<dbReference type="GO" id="GO:0008200">
    <property type="term" value="F:ion channel inhibitor activity"/>
    <property type="evidence" value="ECO:0007669"/>
    <property type="project" value="InterPro"/>
</dbReference>
<dbReference type="GO" id="GO:0090729">
    <property type="term" value="F:toxin activity"/>
    <property type="evidence" value="ECO:0007669"/>
    <property type="project" value="UniProtKB-KW"/>
</dbReference>
<dbReference type="InterPro" id="IPR011696">
    <property type="entry name" value="Huwentoxin-1"/>
</dbReference>
<dbReference type="InterPro" id="IPR013140">
    <property type="entry name" value="Huwentoxin_CS1"/>
</dbReference>
<dbReference type="Pfam" id="PF07740">
    <property type="entry name" value="Toxin_12"/>
    <property type="match status" value="1"/>
</dbReference>
<dbReference type="SUPFAM" id="SSF57059">
    <property type="entry name" value="omega toxin-like"/>
    <property type="match status" value="1"/>
</dbReference>
<dbReference type="PROSITE" id="PS60021">
    <property type="entry name" value="HWTX_1"/>
    <property type="match status" value="1"/>
</dbReference>
<sequence>MVNMKASMFLTFAGLVLLFVVCYASESEEKEFPKGMLSSIFAVDNDFKQEERDCAGYMRECKEELCCSGYVCSSRWKWCVLPAPWRR</sequence>
<accession>D2Y2N2</accession>
<reference key="1">
    <citation type="journal article" date="2010" name="J. Proteome Res.">
        <title>Molecular diversification of peptide toxins from the tarantula Haplopelma hainanum (Ornithoctonus hainana) venom based on transcriptomic, peptidomic, and genomic analyses.</title>
        <authorList>
            <person name="Tang X."/>
            <person name="Zhang Y."/>
            <person name="Hu W."/>
            <person name="Xu D."/>
            <person name="Tao H."/>
            <person name="Yang X."/>
            <person name="Li Y."/>
            <person name="Jiang L."/>
            <person name="Liang S."/>
        </authorList>
    </citation>
    <scope>NUCLEOTIDE SEQUENCE [LARGE SCALE GENOMIC DNA]</scope>
    <source>
        <tissue>Venom gland</tissue>
    </source>
</reference>
<proteinExistence type="inferred from homology"/>
<evidence type="ECO:0000250" key="1"/>
<evidence type="ECO:0000250" key="2">
    <source>
        <dbReference type="UniProtKB" id="B3FIS6"/>
    </source>
</evidence>
<evidence type="ECO:0000255" key="3"/>
<evidence type="ECO:0000305" key="4"/>
<protein>
    <recommendedName>
        <fullName>U3-theraphotoxin-Hhn1e</fullName>
        <shortName>U3-TRTX-Hhn1e</shortName>
    </recommendedName>
    <alternativeName>
        <fullName>Hainantoxin-VIII-13</fullName>
        <shortName>HNTX-VIII-13</shortName>
    </alternativeName>
</protein>